<feature type="chain" id="PRO_0000272759" description="Large ribosomal subunit protein uL23">
    <location>
        <begin position="1"/>
        <end position="98"/>
    </location>
</feature>
<accession>Q2S914</accession>
<name>RL23_HAHCH</name>
<organism>
    <name type="scientific">Hahella chejuensis (strain KCTC 2396)</name>
    <dbReference type="NCBI Taxonomy" id="349521"/>
    <lineage>
        <taxon>Bacteria</taxon>
        <taxon>Pseudomonadati</taxon>
        <taxon>Pseudomonadota</taxon>
        <taxon>Gammaproteobacteria</taxon>
        <taxon>Oceanospirillales</taxon>
        <taxon>Hahellaceae</taxon>
        <taxon>Hahella</taxon>
    </lineage>
</organism>
<keyword id="KW-1185">Reference proteome</keyword>
<keyword id="KW-0687">Ribonucleoprotein</keyword>
<keyword id="KW-0689">Ribosomal protein</keyword>
<keyword id="KW-0694">RNA-binding</keyword>
<keyword id="KW-0699">rRNA-binding</keyword>
<proteinExistence type="inferred from homology"/>
<gene>
    <name evidence="1" type="primary">rplW</name>
    <name type="ordered locus">HCH_06215</name>
</gene>
<sequence length="98" mass="10981">MNQERLYKVLLGPHVSEKATLLAEINNQVVFRVAADAKKPEIKKAVEALFDVKVESVQVVNIKGKTKRTARGMGKRNDIRKAYIRLASGQSIDFVDVE</sequence>
<dbReference type="EMBL" id="CP000155">
    <property type="protein sequence ID" value="ABC32860.1"/>
    <property type="molecule type" value="Genomic_DNA"/>
</dbReference>
<dbReference type="RefSeq" id="WP_011399918.1">
    <property type="nucleotide sequence ID" value="NC_007645.1"/>
</dbReference>
<dbReference type="SMR" id="Q2S914"/>
<dbReference type="STRING" id="349521.HCH_06215"/>
<dbReference type="KEGG" id="hch:HCH_06215"/>
<dbReference type="eggNOG" id="COG0089">
    <property type="taxonomic scope" value="Bacteria"/>
</dbReference>
<dbReference type="HOGENOM" id="CLU_037562_3_1_6"/>
<dbReference type="OrthoDB" id="9793353at2"/>
<dbReference type="Proteomes" id="UP000000238">
    <property type="component" value="Chromosome"/>
</dbReference>
<dbReference type="GO" id="GO:1990904">
    <property type="term" value="C:ribonucleoprotein complex"/>
    <property type="evidence" value="ECO:0007669"/>
    <property type="project" value="UniProtKB-KW"/>
</dbReference>
<dbReference type="GO" id="GO:0005840">
    <property type="term" value="C:ribosome"/>
    <property type="evidence" value="ECO:0007669"/>
    <property type="project" value="UniProtKB-KW"/>
</dbReference>
<dbReference type="GO" id="GO:0019843">
    <property type="term" value="F:rRNA binding"/>
    <property type="evidence" value="ECO:0007669"/>
    <property type="project" value="UniProtKB-UniRule"/>
</dbReference>
<dbReference type="GO" id="GO:0003735">
    <property type="term" value="F:structural constituent of ribosome"/>
    <property type="evidence" value="ECO:0007669"/>
    <property type="project" value="InterPro"/>
</dbReference>
<dbReference type="GO" id="GO:0006412">
    <property type="term" value="P:translation"/>
    <property type="evidence" value="ECO:0007669"/>
    <property type="project" value="UniProtKB-UniRule"/>
</dbReference>
<dbReference type="FunFam" id="3.30.70.330:FF:000001">
    <property type="entry name" value="50S ribosomal protein L23"/>
    <property type="match status" value="1"/>
</dbReference>
<dbReference type="Gene3D" id="3.30.70.330">
    <property type="match status" value="1"/>
</dbReference>
<dbReference type="HAMAP" id="MF_01369_B">
    <property type="entry name" value="Ribosomal_uL23_B"/>
    <property type="match status" value="1"/>
</dbReference>
<dbReference type="InterPro" id="IPR012677">
    <property type="entry name" value="Nucleotide-bd_a/b_plait_sf"/>
</dbReference>
<dbReference type="InterPro" id="IPR013025">
    <property type="entry name" value="Ribosomal_uL23-like"/>
</dbReference>
<dbReference type="InterPro" id="IPR012678">
    <property type="entry name" value="Ribosomal_uL23/eL15/eS24_sf"/>
</dbReference>
<dbReference type="InterPro" id="IPR001014">
    <property type="entry name" value="Ribosomal_uL23_CS"/>
</dbReference>
<dbReference type="NCBIfam" id="NF004359">
    <property type="entry name" value="PRK05738.1-3"/>
    <property type="match status" value="1"/>
</dbReference>
<dbReference type="NCBIfam" id="NF004363">
    <property type="entry name" value="PRK05738.2-4"/>
    <property type="match status" value="1"/>
</dbReference>
<dbReference type="PANTHER" id="PTHR11620">
    <property type="entry name" value="60S RIBOSOMAL PROTEIN L23A"/>
    <property type="match status" value="1"/>
</dbReference>
<dbReference type="Pfam" id="PF00276">
    <property type="entry name" value="Ribosomal_L23"/>
    <property type="match status" value="1"/>
</dbReference>
<dbReference type="SUPFAM" id="SSF54189">
    <property type="entry name" value="Ribosomal proteins S24e, L23 and L15e"/>
    <property type="match status" value="1"/>
</dbReference>
<dbReference type="PROSITE" id="PS00050">
    <property type="entry name" value="RIBOSOMAL_L23"/>
    <property type="match status" value="1"/>
</dbReference>
<protein>
    <recommendedName>
        <fullName evidence="1">Large ribosomal subunit protein uL23</fullName>
    </recommendedName>
    <alternativeName>
        <fullName evidence="2">50S ribosomal protein L23</fullName>
    </alternativeName>
</protein>
<comment type="function">
    <text evidence="1">One of the early assembly proteins it binds 23S rRNA. One of the proteins that surrounds the polypeptide exit tunnel on the outside of the ribosome. Forms the main docking site for trigger factor binding to the ribosome.</text>
</comment>
<comment type="subunit">
    <text evidence="1">Part of the 50S ribosomal subunit. Contacts protein L29, and trigger factor when it is bound to the ribosome.</text>
</comment>
<comment type="similarity">
    <text evidence="1">Belongs to the universal ribosomal protein uL23 family.</text>
</comment>
<evidence type="ECO:0000255" key="1">
    <source>
        <dbReference type="HAMAP-Rule" id="MF_01369"/>
    </source>
</evidence>
<evidence type="ECO:0000305" key="2"/>
<reference key="1">
    <citation type="journal article" date="2005" name="Nucleic Acids Res.">
        <title>Genomic blueprint of Hahella chejuensis, a marine microbe producing an algicidal agent.</title>
        <authorList>
            <person name="Jeong H."/>
            <person name="Yim J.H."/>
            <person name="Lee C."/>
            <person name="Choi S.-H."/>
            <person name="Park Y.K."/>
            <person name="Yoon S.H."/>
            <person name="Hur C.-G."/>
            <person name="Kang H.-Y."/>
            <person name="Kim D."/>
            <person name="Lee H.H."/>
            <person name="Park K.H."/>
            <person name="Park S.-H."/>
            <person name="Park H.-S."/>
            <person name="Lee H.K."/>
            <person name="Oh T.K."/>
            <person name="Kim J.F."/>
        </authorList>
    </citation>
    <scope>NUCLEOTIDE SEQUENCE [LARGE SCALE GENOMIC DNA]</scope>
    <source>
        <strain>KCTC 2396</strain>
    </source>
</reference>